<keyword id="KW-0024">Alternative initiation</keyword>
<keyword id="KW-0025">Alternative splicing</keyword>
<keyword id="KW-1015">Disulfide bond</keyword>
<keyword id="KW-0325">Glycoprotein</keyword>
<keyword id="KW-0945">Host-virus interaction</keyword>
<keyword id="KW-0393">Immunoglobulin domain</keyword>
<keyword id="KW-1087">Inhibition of host complement factors by virus</keyword>
<keyword id="KW-0472">Membrane</keyword>
<keyword id="KW-0732">Signal</keyword>
<keyword id="KW-0812">Transmembrane</keyword>
<keyword id="KW-1133">Transmembrane helix</keyword>
<keyword id="KW-1233">Viral attachment to host adhesion receptor</keyword>
<keyword id="KW-1161">Viral attachment to host cell</keyword>
<keyword id="KW-0899">Viral immunoevasion</keyword>
<keyword id="KW-0946">Virion</keyword>
<keyword id="KW-1160">Virus entry into host cell</keyword>
<organismHost>
    <name type="scientific">Homo sapiens</name>
    <name type="common">Human</name>
    <dbReference type="NCBI Taxonomy" id="9606"/>
</organismHost>
<reference key="1">
    <citation type="journal article" date="1983" name="J. Virol.">
        <title>Detailed analysis of the portion of the herpes simplex virus type 1 genome encoding glycoprotein C.</title>
        <authorList>
            <person name="Frink R.J."/>
            <person name="Eisenberg R.J."/>
            <person name="Cohen G.H."/>
            <person name="Wagner E.K."/>
        </authorList>
    </citation>
    <scope>NUCLEOTIDE SEQUENCE [GENOMIC DNA]</scope>
</reference>
<reference key="2">
    <citation type="journal article" date="1994" name="J. Gen. Virol.">
        <title>Localization of a functional site on herpes simplex virus type 1 glycoprotein C involved in binding to cell surface heparan sulphate.</title>
        <authorList>
            <person name="Trybala E."/>
            <person name="Bergstrom T."/>
            <person name="Svennerholm B."/>
            <person name="Jeansson S."/>
            <person name="Glorioso J.C."/>
            <person name="Olofsson S."/>
        </authorList>
    </citation>
    <scope>HEPARIN BINDING DOMAIN</scope>
</reference>
<reference key="3">
    <citation type="journal article" date="2002" name="J. Gen. Virol.">
        <title>Herpes simplex virus type 1 glycoprotein C is necessary for efficient infection of chondroitin sulfate-expressing gro2C cells.</title>
        <authorList>
            <person name="Mardberg K."/>
            <person name="Trybala E."/>
            <person name="Tufaro F."/>
            <person name="Bergstrom T."/>
        </authorList>
    </citation>
    <scope>FUNCTION</scope>
</reference>
<reference key="4">
    <citation type="journal article" date="2008" name="J. Virol.">
        <title>Blocking antibody access to neutralizing domains on glycoproteins involved in entry as a novel mechanism of immune evasion by herpes simplex virus type 1 glycoproteins C and E.</title>
        <authorList>
            <person name="Hook L.M."/>
            <person name="Huang J."/>
            <person name="Jiang M."/>
            <person name="Hodinka R."/>
            <person name="Friedman H.M."/>
        </authorList>
    </citation>
    <scope>FUNCTION</scope>
    <source>
        <strain>NS</strain>
    </source>
</reference>
<reference key="5">
    <citation type="journal article" date="2008" name="J. Virol.">
        <title>Herpes simplex virus type 1 ICP27 regulates expression of a variant, secreted form of glycoprotein C by an intron retention mechanism.</title>
        <authorList>
            <person name="Sedlackova L."/>
            <person name="Perkins K.D."/>
            <person name="Lengyel J."/>
            <person name="Strain A.K."/>
            <person name="van Santen V.L."/>
            <person name="Rice S.A."/>
        </authorList>
    </citation>
    <scope>ALTERNATIVE SPLICING</scope>
</reference>
<reference key="6">
    <citation type="journal article" date="2010" name="Virology">
        <title>Human antibodies to herpes simplex virus type 1 glycoprotein C are neutralizing and target the heparan sulfate-binding domain.</title>
        <authorList>
            <person name="Adamiak B."/>
            <person name="Trybala E."/>
            <person name="Mardberg K."/>
            <person name="Johansson M."/>
            <person name="Liljeqvist J.A."/>
            <person name="Olofsson S."/>
            <person name="Grabowska A."/>
            <person name="Bienkowska-Szewczyk K."/>
            <person name="Szewczyk B."/>
            <person name="Bergstrom T."/>
        </authorList>
    </citation>
    <scope>FUNCTION</scope>
</reference>
<feature type="signal peptide" evidence="2">
    <location>
        <begin position="1"/>
        <end position="24"/>
    </location>
</feature>
<feature type="chain" id="PRO_0000038198" description="Envelope glycoprotein C">
    <location>
        <begin position="25"/>
        <end position="511"/>
    </location>
</feature>
<feature type="topological domain" description="Virion surface" evidence="2">
    <location>
        <begin position="25"/>
        <end position="480"/>
    </location>
</feature>
<feature type="transmembrane region" description="Helical" evidence="2">
    <location>
        <begin position="481"/>
        <end position="497"/>
    </location>
</feature>
<feature type="topological domain" description="Cytoplasmic" evidence="2">
    <location>
        <begin position="498"/>
        <end position="511"/>
    </location>
</feature>
<feature type="domain" description="Ig-like">
    <location>
        <begin position="267"/>
        <end position="359"/>
    </location>
</feature>
<feature type="region of interest" description="Disordered" evidence="4">
    <location>
        <begin position="41"/>
        <end position="130"/>
    </location>
</feature>
<feature type="region of interest" description="Heparin-binding domain">
    <location>
        <begin position="137"/>
        <end position="151"/>
    </location>
</feature>
<feature type="compositionally biased region" description="Low complexity" evidence="4">
    <location>
        <begin position="43"/>
        <end position="80"/>
    </location>
</feature>
<feature type="glycosylation site" description="N-linked (GlcNAc...) asparagine; by host" evidence="2">
    <location>
        <position position="42"/>
    </location>
</feature>
<feature type="glycosylation site" description="N-linked (GlcNAc...) asparagine; by host" evidence="2">
    <location>
        <position position="70"/>
    </location>
</feature>
<feature type="glycosylation site" description="N-linked (GlcNAc...) asparagine; by host" evidence="2">
    <location>
        <position position="74"/>
    </location>
</feature>
<feature type="glycosylation site" description="N-linked (GlcNAc...) asparagine; by host" evidence="2">
    <location>
        <position position="108"/>
    </location>
</feature>
<feature type="glycosylation site" description="N-linked (GlcNAc...) asparagine; by host" evidence="2">
    <location>
        <position position="148"/>
    </location>
</feature>
<feature type="glycosylation site" description="N-linked (GlcNAc...) asparagine; by host" evidence="2">
    <location>
        <position position="181"/>
    </location>
</feature>
<feature type="glycosylation site" description="N-linked (GlcNAc...) asparagine; by host" evidence="2">
    <location>
        <position position="197"/>
    </location>
</feature>
<feature type="glycosylation site" description="N-linked (GlcNAc...) asparagine; by host" evidence="2">
    <location>
        <position position="362"/>
    </location>
</feature>
<feature type="disulfide bond" evidence="3">
    <location>
        <begin position="127"/>
        <end position="144"/>
    </location>
</feature>
<feature type="disulfide bond" evidence="3">
    <location>
        <begin position="286"/>
        <end position="347"/>
    </location>
</feature>
<feature type="disulfide bond" evidence="3">
    <location>
        <begin position="386"/>
        <end position="442"/>
    </location>
</feature>
<feature type="disulfide bond" evidence="3">
    <location>
        <begin position="390"/>
        <end position="419"/>
    </location>
</feature>
<feature type="splice variant" id="VSP_040893" description="In isoform gCsec." evidence="8">
    <original>VIEAIEWVGIGIGVLAAGVLVVTAIVYVVRTSQSRQRHRR</original>
    <variation>VILGRSRTTHGVEQNASP</variation>
    <location>
        <begin position="472"/>
        <end position="511"/>
    </location>
</feature>
<protein>
    <recommendedName>
        <fullName>Envelope glycoprotein C</fullName>
    </recommendedName>
</protein>
<proteinExistence type="evidence at protein level"/>
<gene>
    <name type="primary">gC</name>
    <name type="synonym">UL44</name>
</gene>
<dbReference type="EMBL" id="J02216">
    <property type="protein sequence ID" value="AAA45779.1"/>
    <property type="molecule type" value="Genomic_DNA"/>
</dbReference>
<dbReference type="EMBL" id="J02216">
    <property type="protein sequence ID" value="AAA45780.1"/>
    <property type="status" value="ALT_INIT"/>
    <property type="molecule type" value="Genomic_DNA"/>
</dbReference>
<dbReference type="PIR" id="A20857">
    <property type="entry name" value="VGBE1K"/>
</dbReference>
<dbReference type="GlyCosmos" id="P28986">
    <property type="glycosylation" value="8 sites, No reported glycans"/>
</dbReference>
<dbReference type="GO" id="GO:0016020">
    <property type="term" value="C:membrane"/>
    <property type="evidence" value="ECO:0007669"/>
    <property type="project" value="UniProtKB-KW"/>
</dbReference>
<dbReference type="GO" id="GO:0055036">
    <property type="term" value="C:virion membrane"/>
    <property type="evidence" value="ECO:0007669"/>
    <property type="project" value="UniProtKB-SubCell"/>
</dbReference>
<dbReference type="GO" id="GO:0098671">
    <property type="term" value="P:adhesion receptor-mediated virion attachment to host cell"/>
    <property type="evidence" value="ECO:0007669"/>
    <property type="project" value="UniProtKB-KW"/>
</dbReference>
<dbReference type="GO" id="GO:0046718">
    <property type="term" value="P:symbiont entry into host cell"/>
    <property type="evidence" value="ECO:0007669"/>
    <property type="project" value="UniProtKB-KW"/>
</dbReference>
<dbReference type="GO" id="GO:0042784">
    <property type="term" value="P:symbiont-mediated suppression of host complement activation"/>
    <property type="evidence" value="ECO:0007669"/>
    <property type="project" value="UniProtKB-KW"/>
</dbReference>
<dbReference type="FunFam" id="2.60.40.10:FF:002631">
    <property type="entry name" value="Envelope glycoprotein C"/>
    <property type="match status" value="1"/>
</dbReference>
<dbReference type="Gene3D" id="2.60.40.10">
    <property type="entry name" value="Immunoglobulins"/>
    <property type="match status" value="1"/>
</dbReference>
<dbReference type="InterPro" id="IPR001038">
    <property type="entry name" value="GA_GC"/>
</dbReference>
<dbReference type="InterPro" id="IPR007110">
    <property type="entry name" value="Ig-like_dom"/>
</dbReference>
<dbReference type="InterPro" id="IPR036179">
    <property type="entry name" value="Ig-like_dom_sf"/>
</dbReference>
<dbReference type="InterPro" id="IPR013783">
    <property type="entry name" value="Ig-like_fold"/>
</dbReference>
<dbReference type="Pfam" id="PF02124">
    <property type="entry name" value="Marek_A"/>
    <property type="match status" value="1"/>
</dbReference>
<dbReference type="PRINTS" id="PR00668">
    <property type="entry name" value="GLYCPROTEINC"/>
</dbReference>
<dbReference type="SUPFAM" id="SSF48726">
    <property type="entry name" value="Immunoglobulin"/>
    <property type="match status" value="1"/>
</dbReference>
<dbReference type="PROSITE" id="PS50835">
    <property type="entry name" value="IG_LIKE"/>
    <property type="match status" value="1"/>
</dbReference>
<evidence type="ECO:0000250" key="1"/>
<evidence type="ECO:0000255" key="2"/>
<evidence type="ECO:0000255" key="3">
    <source>
        <dbReference type="PROSITE-ProRule" id="PRU00114"/>
    </source>
</evidence>
<evidence type="ECO:0000256" key="4">
    <source>
        <dbReference type="SAM" id="MobiDB-lite"/>
    </source>
</evidence>
<evidence type="ECO:0000269" key="5">
    <source>
    </source>
</evidence>
<evidence type="ECO:0000269" key="6">
    <source>
    </source>
</evidence>
<evidence type="ECO:0000269" key="7">
    <source>
    </source>
</evidence>
<evidence type="ECO:0000305" key="8"/>
<comment type="function">
    <text evidence="5 6 7">Major attachment protein that mediates binding of the virus to cell surface heparan sulfate or chondroitin sulfate. Also plays several roles in host immune evasion by inhibiting the host complement cascade activation, and by providing a shield against neutralizing antibodies that interfere with gB-gD, gB-gH/gL or gD-gH/gL interactions.</text>
</comment>
<comment type="subunit">
    <text evidence="1">Interacts with host complement component C3b; this interaction inhibits host immune response by disregulating complement cascade.</text>
</comment>
<comment type="subcellular location">
    <subcellularLocation>
        <location evidence="8">Virion membrane</location>
        <topology evidence="8">Single-pass membrane protein</topology>
    </subcellularLocation>
</comment>
<comment type="alternative products">
    <event type="alternative splicing"/>
    <event type="alternative initiation"/>
    <isoform>
        <id>P28986-1</id>
        <name>gC</name>
        <sequence type="displayed"/>
    </isoform>
    <isoform>
        <id>P28986-2</id>
        <name>gCsec</name>
        <sequence type="described" ref="VSP_040893"/>
    </isoform>
</comment>
<comment type="miscellaneous">
    <text>There are seven external glycoproteins in HSV-1 and 2: gH, gB, gC, gG, gD, gI, and gE.</text>
</comment>
<comment type="miscellaneous">
    <molecule>Isoform gC</molecule>
    <text>Membrane-bound gC.</text>
</comment>
<comment type="miscellaneous">
    <molecule>Isoform gCsec</molecule>
    <text evidence="8">Secreted.</text>
</comment>
<comment type="similarity">
    <text evidence="8">Belongs to the herpesviridae glycoprotein C family.</text>
</comment>
<comment type="sequence caution" evidence="8">
    <conflict type="erroneous initiation">
        <sequence resource="EMBL-CDS" id="AAA45780"/>
    </conflict>
</comment>
<name>GC_HHV1K</name>
<organism>
    <name type="scientific">Human herpesvirus 1 (strain KOS)</name>
    <name type="common">HHV-1</name>
    <name type="synonym">Human herpes simplex virus 1</name>
    <dbReference type="NCBI Taxonomy" id="10306"/>
    <lineage>
        <taxon>Viruses</taxon>
        <taxon>Duplodnaviria</taxon>
        <taxon>Heunggongvirae</taxon>
        <taxon>Peploviricota</taxon>
        <taxon>Herviviricetes</taxon>
        <taxon>Herpesvirales</taxon>
        <taxon>Orthoherpesviridae</taxon>
        <taxon>Alphaherpesvirinae</taxon>
        <taxon>Simplexvirus</taxon>
        <taxon>Simplexvirus humanalpha1</taxon>
        <taxon>Human herpesvirus 1</taxon>
    </lineage>
</organism>
<accession>P28986</accession>
<accession>Q68982</accession>
<sequence length="511" mass="55011">MAPGRVGLAVVLWGLLWLGAGVAGGSETASTGPTITAGAVTNASEAPTSGSPGSAASPEVTPTSTPNPNNVTQNKTTPTEPASPPTTPKPTSTPKSPPTSTPDPKPKNNTTPAKSGRPTKPPGPVWCDRRDPLARYGSRVQIRCRFRNSTRMEFRLQIWRYSMGPSPPIAPAPDLEEVLTNITAPPGGLLVYDSAPNLTDPHVLWAEGAGPGADPPLYSVTGPLPTQRLIIGEVTPATQGMYYLAWGRMDSPHEYGTWVRVRMFRPPSLTLQPHAVMEGQPFKATCTAAAYYPRNPVEFDWFEDDRQVFNPGQIDTQTHEHPDGFTTVSTVTSEAVGGQVPPRTFTCQMTWHRDSVTFSRRNATGLALVLPRPTITMEFGVRHVVCTAGCVPEGVTFAWFLGDDPSPAAKSAVTAQESCDHPGLATVRSTLPISYDYSEYICRLTGYPAGIPVLEHHGSHQPPPRDPTERQVIEAIEWVGIGIGVLAAGVLVVTAIVYVVRTSQSRQRHRR</sequence>